<sequence>MKNINPSQTAAWKALQQHFEQMKDVTISSLFAKDDQRFNRFSATFDDQMLVDFSKNRITSETLEKLQDLAKETDLAGAIKSMFSGEKINRTEDRAVLHIALRNRSNTPIVVDGKDVMPEVNAVLAKMKQFCDRVISGDWKGYTGKAITDVVNIGIGGSDLGPYMVTEALRPYKNHLNMHFVSNVDGTHIAEALKPLNPETTLFLVASKTFTTQETMTNAHSARDWFLSAAGDPAHVAKHFAALSTNAKAVGEFGIDTNNMFEFWDWVGGRYSLWSAIGLSIALSVGFEHFEQLLSGAHAMDKHFAETPAEKNLPVLLALIGIWYNNFFGAETEAILPYDQYMHRFPAYFQQGNMESNGKYVDRNGHPVDYQTGPIIWGEPGTNGQHAFYQLIHQGTKLIPCDFIAPAISHNPLSDHHAKLLSNFFAQTEALAFGKSLEDVEAEFAAAGKTPEQVAHVAPFKVFEGNRPTNSILLREITPFSLGALIALYEHKIFTQGVILNIYTFDQWGVELGKQLANRILPELADDQEVTSHDSSTNALINRFKNWR</sequence>
<dbReference type="EC" id="5.3.1.9" evidence="1"/>
<dbReference type="EMBL" id="AL590842">
    <property type="protein sequence ID" value="CAL22305.1"/>
    <property type="molecule type" value="Genomic_DNA"/>
</dbReference>
<dbReference type="EMBL" id="AE009952">
    <property type="protein sequence ID" value="AAM83619.1"/>
    <property type="molecule type" value="Genomic_DNA"/>
</dbReference>
<dbReference type="EMBL" id="AE017042">
    <property type="protein sequence ID" value="AAS63251.1"/>
    <property type="molecule type" value="Genomic_DNA"/>
</dbReference>
<dbReference type="PIR" id="AF0452">
    <property type="entry name" value="AF0452"/>
</dbReference>
<dbReference type="RefSeq" id="WP_002212085.1">
    <property type="nucleotide sequence ID" value="NZ_WUCM01000050.1"/>
</dbReference>
<dbReference type="RefSeq" id="YP_002348599.1">
    <property type="nucleotide sequence ID" value="NC_003143.1"/>
</dbReference>
<dbReference type="SMR" id="Q8ZAS2"/>
<dbReference type="STRING" id="214092.YPO3718"/>
<dbReference type="PaxDb" id="214092-YPO3718"/>
<dbReference type="DNASU" id="1144971"/>
<dbReference type="EnsemblBacteria" id="AAS63251">
    <property type="protein sequence ID" value="AAS63251"/>
    <property type="gene ID" value="YP_3080"/>
</dbReference>
<dbReference type="GeneID" id="57975003"/>
<dbReference type="KEGG" id="ype:YPO3718"/>
<dbReference type="KEGG" id="ypk:y0024"/>
<dbReference type="KEGG" id="ypm:YP_3080"/>
<dbReference type="PATRIC" id="fig|214092.21.peg.4229"/>
<dbReference type="eggNOG" id="COG0166">
    <property type="taxonomic scope" value="Bacteria"/>
</dbReference>
<dbReference type="HOGENOM" id="CLU_017947_3_1_6"/>
<dbReference type="OMA" id="DWYRQLW"/>
<dbReference type="OrthoDB" id="140919at2"/>
<dbReference type="UniPathway" id="UPA00109">
    <property type="reaction ID" value="UER00181"/>
</dbReference>
<dbReference type="UniPathway" id="UPA00138"/>
<dbReference type="Proteomes" id="UP000000815">
    <property type="component" value="Chromosome"/>
</dbReference>
<dbReference type="Proteomes" id="UP000001019">
    <property type="component" value="Chromosome"/>
</dbReference>
<dbReference type="Proteomes" id="UP000002490">
    <property type="component" value="Chromosome"/>
</dbReference>
<dbReference type="GO" id="GO:0005829">
    <property type="term" value="C:cytosol"/>
    <property type="evidence" value="ECO:0000318"/>
    <property type="project" value="GO_Central"/>
</dbReference>
<dbReference type="GO" id="GO:0097367">
    <property type="term" value="F:carbohydrate derivative binding"/>
    <property type="evidence" value="ECO:0007669"/>
    <property type="project" value="InterPro"/>
</dbReference>
<dbReference type="GO" id="GO:0004347">
    <property type="term" value="F:glucose-6-phosphate isomerase activity"/>
    <property type="evidence" value="ECO:0000318"/>
    <property type="project" value="GO_Central"/>
</dbReference>
<dbReference type="GO" id="GO:0048029">
    <property type="term" value="F:monosaccharide binding"/>
    <property type="evidence" value="ECO:0000318"/>
    <property type="project" value="GO_Central"/>
</dbReference>
<dbReference type="GO" id="GO:0006094">
    <property type="term" value="P:gluconeogenesis"/>
    <property type="evidence" value="ECO:0000318"/>
    <property type="project" value="GO_Central"/>
</dbReference>
<dbReference type="GO" id="GO:0051156">
    <property type="term" value="P:glucose 6-phosphate metabolic process"/>
    <property type="evidence" value="ECO:0000318"/>
    <property type="project" value="GO_Central"/>
</dbReference>
<dbReference type="GO" id="GO:0006096">
    <property type="term" value="P:glycolytic process"/>
    <property type="evidence" value="ECO:0000318"/>
    <property type="project" value="GO_Central"/>
</dbReference>
<dbReference type="CDD" id="cd05015">
    <property type="entry name" value="SIS_PGI_1"/>
    <property type="match status" value="1"/>
</dbReference>
<dbReference type="CDD" id="cd05016">
    <property type="entry name" value="SIS_PGI_2"/>
    <property type="match status" value="1"/>
</dbReference>
<dbReference type="FunFam" id="1.10.1390.10:FF:000001">
    <property type="entry name" value="Glucose-6-phosphate isomerase"/>
    <property type="match status" value="1"/>
</dbReference>
<dbReference type="FunFam" id="3.40.50.10490:FF:000004">
    <property type="entry name" value="Glucose-6-phosphate isomerase"/>
    <property type="match status" value="1"/>
</dbReference>
<dbReference type="Gene3D" id="1.10.1390.10">
    <property type="match status" value="1"/>
</dbReference>
<dbReference type="Gene3D" id="3.40.50.10490">
    <property type="entry name" value="Glucose-6-phosphate isomerase like protein, domain 1"/>
    <property type="match status" value="2"/>
</dbReference>
<dbReference type="HAMAP" id="MF_00473">
    <property type="entry name" value="G6P_isomerase"/>
    <property type="match status" value="1"/>
</dbReference>
<dbReference type="InterPro" id="IPR001672">
    <property type="entry name" value="G6P_Isomerase"/>
</dbReference>
<dbReference type="InterPro" id="IPR023096">
    <property type="entry name" value="G6P_Isomerase_C"/>
</dbReference>
<dbReference type="InterPro" id="IPR018189">
    <property type="entry name" value="Phosphoglucose_isomerase_CS"/>
</dbReference>
<dbReference type="InterPro" id="IPR046348">
    <property type="entry name" value="SIS_dom_sf"/>
</dbReference>
<dbReference type="InterPro" id="IPR035476">
    <property type="entry name" value="SIS_PGI_1"/>
</dbReference>
<dbReference type="InterPro" id="IPR035482">
    <property type="entry name" value="SIS_PGI_2"/>
</dbReference>
<dbReference type="NCBIfam" id="NF001211">
    <property type="entry name" value="PRK00179.1"/>
    <property type="match status" value="1"/>
</dbReference>
<dbReference type="PANTHER" id="PTHR11469">
    <property type="entry name" value="GLUCOSE-6-PHOSPHATE ISOMERASE"/>
    <property type="match status" value="1"/>
</dbReference>
<dbReference type="PANTHER" id="PTHR11469:SF1">
    <property type="entry name" value="GLUCOSE-6-PHOSPHATE ISOMERASE"/>
    <property type="match status" value="1"/>
</dbReference>
<dbReference type="Pfam" id="PF00342">
    <property type="entry name" value="PGI"/>
    <property type="match status" value="1"/>
</dbReference>
<dbReference type="PRINTS" id="PR00662">
    <property type="entry name" value="G6PISOMERASE"/>
</dbReference>
<dbReference type="SUPFAM" id="SSF53697">
    <property type="entry name" value="SIS domain"/>
    <property type="match status" value="1"/>
</dbReference>
<dbReference type="PROSITE" id="PS00765">
    <property type="entry name" value="P_GLUCOSE_ISOMERASE_1"/>
    <property type="match status" value="1"/>
</dbReference>
<dbReference type="PROSITE" id="PS00174">
    <property type="entry name" value="P_GLUCOSE_ISOMERASE_2"/>
    <property type="match status" value="1"/>
</dbReference>
<dbReference type="PROSITE" id="PS51463">
    <property type="entry name" value="P_GLUCOSE_ISOMERASE_3"/>
    <property type="match status" value="1"/>
</dbReference>
<comment type="function">
    <text evidence="1">Catalyzes the reversible isomerization of glucose-6-phosphate to fructose-6-phosphate.</text>
</comment>
<comment type="catalytic activity">
    <reaction evidence="1">
        <text>alpha-D-glucose 6-phosphate = beta-D-fructose 6-phosphate</text>
        <dbReference type="Rhea" id="RHEA:11816"/>
        <dbReference type="ChEBI" id="CHEBI:57634"/>
        <dbReference type="ChEBI" id="CHEBI:58225"/>
        <dbReference type="EC" id="5.3.1.9"/>
    </reaction>
</comment>
<comment type="pathway">
    <text evidence="1">Carbohydrate biosynthesis; gluconeogenesis.</text>
</comment>
<comment type="pathway">
    <text evidence="1">Carbohydrate degradation; glycolysis; D-glyceraldehyde 3-phosphate and glycerone phosphate from D-glucose: step 2/4.</text>
</comment>
<comment type="subcellular location">
    <subcellularLocation>
        <location evidence="1">Cytoplasm</location>
    </subcellularLocation>
</comment>
<comment type="similarity">
    <text evidence="1">Belongs to the GPI family.</text>
</comment>
<proteinExistence type="inferred from homology"/>
<accession>Q8ZAS2</accession>
<accession>Q0WAT9</accession>
<protein>
    <recommendedName>
        <fullName evidence="1">Glucose-6-phosphate isomerase</fullName>
        <shortName evidence="1">GPI</shortName>
        <ecNumber evidence="1">5.3.1.9</ecNumber>
    </recommendedName>
    <alternativeName>
        <fullName evidence="1">Phosphoglucose isomerase</fullName>
        <shortName evidence="1">PGI</shortName>
    </alternativeName>
    <alternativeName>
        <fullName evidence="1">Phosphohexose isomerase</fullName>
        <shortName evidence="1">PHI</shortName>
    </alternativeName>
</protein>
<feature type="chain" id="PRO_0000180775" description="Glucose-6-phosphate isomerase">
    <location>
        <begin position="1"/>
        <end position="548"/>
    </location>
</feature>
<feature type="active site" description="Proton donor" evidence="1">
    <location>
        <position position="355"/>
    </location>
</feature>
<feature type="active site" evidence="1">
    <location>
        <position position="386"/>
    </location>
</feature>
<feature type="active site" evidence="1">
    <location>
        <position position="514"/>
    </location>
</feature>
<feature type="sequence conflict" description="In Ref. 3; AAS63251." evidence="2" ref="3">
    <original>A</original>
    <variation>S</variation>
    <location>
        <position position="297"/>
    </location>
</feature>
<organism>
    <name type="scientific">Yersinia pestis</name>
    <dbReference type="NCBI Taxonomy" id="632"/>
    <lineage>
        <taxon>Bacteria</taxon>
        <taxon>Pseudomonadati</taxon>
        <taxon>Pseudomonadota</taxon>
        <taxon>Gammaproteobacteria</taxon>
        <taxon>Enterobacterales</taxon>
        <taxon>Yersiniaceae</taxon>
        <taxon>Yersinia</taxon>
    </lineage>
</organism>
<name>G6PI_YERPE</name>
<reference key="1">
    <citation type="journal article" date="2001" name="Nature">
        <title>Genome sequence of Yersinia pestis, the causative agent of plague.</title>
        <authorList>
            <person name="Parkhill J."/>
            <person name="Wren B.W."/>
            <person name="Thomson N.R."/>
            <person name="Titball R.W."/>
            <person name="Holden M.T.G."/>
            <person name="Prentice M.B."/>
            <person name="Sebaihia M."/>
            <person name="James K.D."/>
            <person name="Churcher C.M."/>
            <person name="Mungall K.L."/>
            <person name="Baker S."/>
            <person name="Basham D."/>
            <person name="Bentley S.D."/>
            <person name="Brooks K."/>
            <person name="Cerdeno-Tarraga A.-M."/>
            <person name="Chillingworth T."/>
            <person name="Cronin A."/>
            <person name="Davies R.M."/>
            <person name="Davis P."/>
            <person name="Dougan G."/>
            <person name="Feltwell T."/>
            <person name="Hamlin N."/>
            <person name="Holroyd S."/>
            <person name="Jagels K."/>
            <person name="Karlyshev A.V."/>
            <person name="Leather S."/>
            <person name="Moule S."/>
            <person name="Oyston P.C.F."/>
            <person name="Quail M.A."/>
            <person name="Rutherford K.M."/>
            <person name="Simmonds M."/>
            <person name="Skelton J."/>
            <person name="Stevens K."/>
            <person name="Whitehead S."/>
            <person name="Barrell B.G."/>
        </authorList>
    </citation>
    <scope>NUCLEOTIDE SEQUENCE [LARGE SCALE GENOMIC DNA]</scope>
    <source>
        <strain>CO-92 / Biovar Orientalis</strain>
    </source>
</reference>
<reference key="2">
    <citation type="journal article" date="2002" name="J. Bacteriol.">
        <title>Genome sequence of Yersinia pestis KIM.</title>
        <authorList>
            <person name="Deng W."/>
            <person name="Burland V."/>
            <person name="Plunkett G. III"/>
            <person name="Boutin A."/>
            <person name="Mayhew G.F."/>
            <person name="Liss P."/>
            <person name="Perna N.T."/>
            <person name="Rose D.J."/>
            <person name="Mau B."/>
            <person name="Zhou S."/>
            <person name="Schwartz D.C."/>
            <person name="Fetherston J.D."/>
            <person name="Lindler L.E."/>
            <person name="Brubaker R.R."/>
            <person name="Plano G.V."/>
            <person name="Straley S.C."/>
            <person name="McDonough K.A."/>
            <person name="Nilles M.L."/>
            <person name="Matson J.S."/>
            <person name="Blattner F.R."/>
            <person name="Perry R.D."/>
        </authorList>
    </citation>
    <scope>NUCLEOTIDE SEQUENCE [LARGE SCALE GENOMIC DNA]</scope>
    <source>
        <strain>KIM10+ / Biovar Mediaevalis</strain>
    </source>
</reference>
<reference key="3">
    <citation type="journal article" date="2004" name="DNA Res.">
        <title>Complete genome sequence of Yersinia pestis strain 91001, an isolate avirulent to humans.</title>
        <authorList>
            <person name="Song Y."/>
            <person name="Tong Z."/>
            <person name="Wang J."/>
            <person name="Wang L."/>
            <person name="Guo Z."/>
            <person name="Han Y."/>
            <person name="Zhang J."/>
            <person name="Pei D."/>
            <person name="Zhou D."/>
            <person name="Qin H."/>
            <person name="Pang X."/>
            <person name="Han Y."/>
            <person name="Zhai J."/>
            <person name="Li M."/>
            <person name="Cui B."/>
            <person name="Qi Z."/>
            <person name="Jin L."/>
            <person name="Dai R."/>
            <person name="Chen F."/>
            <person name="Li S."/>
            <person name="Ye C."/>
            <person name="Du Z."/>
            <person name="Lin W."/>
            <person name="Wang J."/>
            <person name="Yu J."/>
            <person name="Yang H."/>
            <person name="Wang J."/>
            <person name="Huang P."/>
            <person name="Yang R."/>
        </authorList>
    </citation>
    <scope>NUCLEOTIDE SEQUENCE [LARGE SCALE GENOMIC DNA]</scope>
    <source>
        <strain>91001 / Biovar Mediaevalis</strain>
    </source>
</reference>
<gene>
    <name evidence="1" type="primary">pgi</name>
    <name type="ordered locus">YPO3718</name>
    <name type="ordered locus">y0024</name>
    <name type="ordered locus">YP_3080</name>
</gene>
<keyword id="KW-0963">Cytoplasm</keyword>
<keyword id="KW-0312">Gluconeogenesis</keyword>
<keyword id="KW-0324">Glycolysis</keyword>
<keyword id="KW-0413">Isomerase</keyword>
<keyword id="KW-1185">Reference proteome</keyword>
<evidence type="ECO:0000255" key="1">
    <source>
        <dbReference type="HAMAP-Rule" id="MF_00473"/>
    </source>
</evidence>
<evidence type="ECO:0000305" key="2"/>